<keyword id="KW-0460">Magnesium</keyword>
<keyword id="KW-0479">Metal-binding</keyword>
<keyword id="KW-0784">Thiamine biosynthesis</keyword>
<keyword id="KW-0808">Transferase</keyword>
<comment type="function">
    <text evidence="1">Condenses 4-methyl-5-(beta-hydroxyethyl)thiazole monophosphate (THZ-P) and 2-methyl-4-amino-5-hydroxymethyl pyrimidine pyrophosphate (HMP-PP) to form thiamine monophosphate (TMP).</text>
</comment>
<comment type="catalytic activity">
    <reaction evidence="1">
        <text>2-[(2R,5Z)-2-carboxy-4-methylthiazol-5(2H)-ylidene]ethyl phosphate + 4-amino-2-methyl-5-(diphosphooxymethyl)pyrimidine + 2 H(+) = thiamine phosphate + CO2 + diphosphate</text>
        <dbReference type="Rhea" id="RHEA:47844"/>
        <dbReference type="ChEBI" id="CHEBI:15378"/>
        <dbReference type="ChEBI" id="CHEBI:16526"/>
        <dbReference type="ChEBI" id="CHEBI:33019"/>
        <dbReference type="ChEBI" id="CHEBI:37575"/>
        <dbReference type="ChEBI" id="CHEBI:57841"/>
        <dbReference type="ChEBI" id="CHEBI:62899"/>
        <dbReference type="EC" id="2.5.1.3"/>
    </reaction>
</comment>
<comment type="catalytic activity">
    <reaction evidence="1">
        <text>2-(2-carboxy-4-methylthiazol-5-yl)ethyl phosphate + 4-amino-2-methyl-5-(diphosphooxymethyl)pyrimidine + 2 H(+) = thiamine phosphate + CO2 + diphosphate</text>
        <dbReference type="Rhea" id="RHEA:47848"/>
        <dbReference type="ChEBI" id="CHEBI:15378"/>
        <dbReference type="ChEBI" id="CHEBI:16526"/>
        <dbReference type="ChEBI" id="CHEBI:33019"/>
        <dbReference type="ChEBI" id="CHEBI:37575"/>
        <dbReference type="ChEBI" id="CHEBI:57841"/>
        <dbReference type="ChEBI" id="CHEBI:62890"/>
        <dbReference type="EC" id="2.5.1.3"/>
    </reaction>
</comment>
<comment type="catalytic activity">
    <reaction evidence="1">
        <text>4-methyl-5-(2-phosphooxyethyl)-thiazole + 4-amino-2-methyl-5-(diphosphooxymethyl)pyrimidine + H(+) = thiamine phosphate + diphosphate</text>
        <dbReference type="Rhea" id="RHEA:22328"/>
        <dbReference type="ChEBI" id="CHEBI:15378"/>
        <dbReference type="ChEBI" id="CHEBI:33019"/>
        <dbReference type="ChEBI" id="CHEBI:37575"/>
        <dbReference type="ChEBI" id="CHEBI:57841"/>
        <dbReference type="ChEBI" id="CHEBI:58296"/>
        <dbReference type="EC" id="2.5.1.3"/>
    </reaction>
</comment>
<comment type="cofactor">
    <cofactor evidence="1">
        <name>Mg(2+)</name>
        <dbReference type="ChEBI" id="CHEBI:18420"/>
    </cofactor>
    <text evidence="1">Binds 1 Mg(2+) ion per subunit.</text>
</comment>
<comment type="pathway">
    <text evidence="1">Cofactor biosynthesis; thiamine diphosphate biosynthesis; thiamine phosphate from 4-amino-2-methyl-5-diphosphomethylpyrimidine and 4-methyl-5-(2-phosphoethyl)-thiazole: step 1/1.</text>
</comment>
<comment type="similarity">
    <text evidence="1">Belongs to the thiamine-phosphate synthase family.</text>
</comment>
<dbReference type="EC" id="2.5.1.3" evidence="1"/>
<dbReference type="EMBL" id="CP000922">
    <property type="protein sequence ID" value="ACJ33714.1"/>
    <property type="molecule type" value="Genomic_DNA"/>
</dbReference>
<dbReference type="RefSeq" id="WP_012574963.1">
    <property type="nucleotide sequence ID" value="NC_011567.1"/>
</dbReference>
<dbReference type="SMR" id="B7GKQ8"/>
<dbReference type="STRING" id="491915.Aflv_1346"/>
<dbReference type="GeneID" id="7037599"/>
<dbReference type="KEGG" id="afl:Aflv_1346"/>
<dbReference type="PATRIC" id="fig|491915.6.peg.1384"/>
<dbReference type="eggNOG" id="COG0352">
    <property type="taxonomic scope" value="Bacteria"/>
</dbReference>
<dbReference type="HOGENOM" id="CLU_018272_3_2_9"/>
<dbReference type="UniPathway" id="UPA00060">
    <property type="reaction ID" value="UER00141"/>
</dbReference>
<dbReference type="Proteomes" id="UP000000742">
    <property type="component" value="Chromosome"/>
</dbReference>
<dbReference type="GO" id="GO:0005737">
    <property type="term" value="C:cytoplasm"/>
    <property type="evidence" value="ECO:0007669"/>
    <property type="project" value="TreeGrafter"/>
</dbReference>
<dbReference type="GO" id="GO:0000287">
    <property type="term" value="F:magnesium ion binding"/>
    <property type="evidence" value="ECO:0007669"/>
    <property type="project" value="UniProtKB-UniRule"/>
</dbReference>
<dbReference type="GO" id="GO:0004789">
    <property type="term" value="F:thiamine-phosphate diphosphorylase activity"/>
    <property type="evidence" value="ECO:0007669"/>
    <property type="project" value="UniProtKB-UniRule"/>
</dbReference>
<dbReference type="GO" id="GO:0009228">
    <property type="term" value="P:thiamine biosynthetic process"/>
    <property type="evidence" value="ECO:0007669"/>
    <property type="project" value="UniProtKB-KW"/>
</dbReference>
<dbReference type="GO" id="GO:0009229">
    <property type="term" value="P:thiamine diphosphate biosynthetic process"/>
    <property type="evidence" value="ECO:0007669"/>
    <property type="project" value="UniProtKB-UniRule"/>
</dbReference>
<dbReference type="CDD" id="cd00564">
    <property type="entry name" value="TMP_TenI"/>
    <property type="match status" value="1"/>
</dbReference>
<dbReference type="FunFam" id="3.20.20.70:FF:000096">
    <property type="entry name" value="Thiamine-phosphate synthase"/>
    <property type="match status" value="1"/>
</dbReference>
<dbReference type="Gene3D" id="3.20.20.70">
    <property type="entry name" value="Aldolase class I"/>
    <property type="match status" value="1"/>
</dbReference>
<dbReference type="HAMAP" id="MF_00097">
    <property type="entry name" value="TMP_synthase"/>
    <property type="match status" value="1"/>
</dbReference>
<dbReference type="InterPro" id="IPR013785">
    <property type="entry name" value="Aldolase_TIM"/>
</dbReference>
<dbReference type="InterPro" id="IPR036206">
    <property type="entry name" value="ThiamineP_synth_sf"/>
</dbReference>
<dbReference type="InterPro" id="IPR022998">
    <property type="entry name" value="ThiamineP_synth_TenI"/>
</dbReference>
<dbReference type="InterPro" id="IPR034291">
    <property type="entry name" value="TMP_synthase"/>
</dbReference>
<dbReference type="NCBIfam" id="TIGR00693">
    <property type="entry name" value="thiE"/>
    <property type="match status" value="1"/>
</dbReference>
<dbReference type="PANTHER" id="PTHR20857">
    <property type="entry name" value="THIAMINE-PHOSPHATE PYROPHOSPHORYLASE"/>
    <property type="match status" value="1"/>
</dbReference>
<dbReference type="PANTHER" id="PTHR20857:SF15">
    <property type="entry name" value="THIAMINE-PHOSPHATE SYNTHASE"/>
    <property type="match status" value="1"/>
</dbReference>
<dbReference type="Pfam" id="PF02581">
    <property type="entry name" value="TMP-TENI"/>
    <property type="match status" value="1"/>
</dbReference>
<dbReference type="SUPFAM" id="SSF51391">
    <property type="entry name" value="Thiamin phosphate synthase"/>
    <property type="match status" value="1"/>
</dbReference>
<organism>
    <name type="scientific">Anoxybacillus flavithermus (strain DSM 21510 / WK1)</name>
    <dbReference type="NCBI Taxonomy" id="491915"/>
    <lineage>
        <taxon>Bacteria</taxon>
        <taxon>Bacillati</taxon>
        <taxon>Bacillota</taxon>
        <taxon>Bacilli</taxon>
        <taxon>Bacillales</taxon>
        <taxon>Anoxybacillaceae</taxon>
        <taxon>Anoxybacillus</taxon>
    </lineage>
</organism>
<feature type="chain" id="PRO_1000117294" description="Thiamine-phosphate synthase">
    <location>
        <begin position="1"/>
        <end position="217"/>
    </location>
</feature>
<feature type="binding site" evidence="1">
    <location>
        <begin position="37"/>
        <end position="41"/>
    </location>
    <ligand>
        <name>4-amino-2-methyl-5-(diphosphooxymethyl)pyrimidine</name>
        <dbReference type="ChEBI" id="CHEBI:57841"/>
    </ligand>
</feature>
<feature type="binding site" evidence="1">
    <location>
        <position position="72"/>
    </location>
    <ligand>
        <name>4-amino-2-methyl-5-(diphosphooxymethyl)pyrimidine</name>
        <dbReference type="ChEBI" id="CHEBI:57841"/>
    </ligand>
</feature>
<feature type="binding site" evidence="1">
    <location>
        <position position="73"/>
    </location>
    <ligand>
        <name>Mg(2+)</name>
        <dbReference type="ChEBI" id="CHEBI:18420"/>
    </ligand>
</feature>
<feature type="binding site" evidence="1">
    <location>
        <position position="92"/>
    </location>
    <ligand>
        <name>Mg(2+)</name>
        <dbReference type="ChEBI" id="CHEBI:18420"/>
    </ligand>
</feature>
<feature type="binding site" evidence="1">
    <location>
        <position position="110"/>
    </location>
    <ligand>
        <name>4-amino-2-methyl-5-(diphosphooxymethyl)pyrimidine</name>
        <dbReference type="ChEBI" id="CHEBI:57841"/>
    </ligand>
</feature>
<feature type="binding site" evidence="1">
    <location>
        <begin position="136"/>
        <end position="138"/>
    </location>
    <ligand>
        <name>2-[(2R,5Z)-2-carboxy-4-methylthiazol-5(2H)-ylidene]ethyl phosphate</name>
        <dbReference type="ChEBI" id="CHEBI:62899"/>
    </ligand>
</feature>
<feature type="binding site" evidence="1">
    <location>
        <position position="139"/>
    </location>
    <ligand>
        <name>4-amino-2-methyl-5-(diphosphooxymethyl)pyrimidine</name>
        <dbReference type="ChEBI" id="CHEBI:57841"/>
    </ligand>
</feature>
<feature type="binding site" evidence="1">
    <location>
        <position position="168"/>
    </location>
    <ligand>
        <name>2-[(2R,5Z)-2-carboxy-4-methylthiazol-5(2H)-ylidene]ethyl phosphate</name>
        <dbReference type="ChEBI" id="CHEBI:62899"/>
    </ligand>
</feature>
<feature type="binding site" evidence="1">
    <location>
        <begin position="188"/>
        <end position="189"/>
    </location>
    <ligand>
        <name>2-[(2R,5Z)-2-carboxy-4-methylthiazol-5(2H)-ylidene]ethyl phosphate</name>
        <dbReference type="ChEBI" id="CHEBI:62899"/>
    </ligand>
</feature>
<evidence type="ECO:0000255" key="1">
    <source>
        <dbReference type="HAMAP-Rule" id="MF_00097"/>
    </source>
</evidence>
<gene>
    <name evidence="1" type="primary">thiE</name>
    <name type="ordered locus">Aflv_1346</name>
</gene>
<proteinExistence type="inferred from homology"/>
<accession>B7GKQ8</accession>
<name>THIE_ANOFW</name>
<sequence length="217" mass="24037">MMKQKLSLYFVMGSIDCTKDPLAVLDEAIKGGITMFQFREKGKGALTGIEKYRLAEKLLERCRMYNIPFIVNDDVDLALALQADGVHVGQEDEVAERVRDRIGDKYLGVSVHNLNEVKKALAACADYVGLGPIFPTVSKEDAKQACGLTMIEHIRAHEKRVPLVAIGGITEQTAKQVIEAGADGIAVISAICRAEHIYEQTKRLYEMVMRAKQKGDR</sequence>
<reference key="1">
    <citation type="journal article" date="2008" name="Genome Biol.">
        <title>Encapsulated in silica: genome, proteome and physiology of the thermophilic bacterium Anoxybacillus flavithermus WK1.</title>
        <authorList>
            <person name="Saw J.H."/>
            <person name="Mountain B.W."/>
            <person name="Feng L."/>
            <person name="Omelchenko M.V."/>
            <person name="Hou S."/>
            <person name="Saito J.A."/>
            <person name="Stott M.B."/>
            <person name="Li D."/>
            <person name="Zhao G."/>
            <person name="Wu J."/>
            <person name="Galperin M.Y."/>
            <person name="Koonin E.V."/>
            <person name="Makarova K.S."/>
            <person name="Wolf Y.I."/>
            <person name="Rigden D.J."/>
            <person name="Dunfield P.F."/>
            <person name="Wang L."/>
            <person name="Alam M."/>
        </authorList>
    </citation>
    <scope>NUCLEOTIDE SEQUENCE [LARGE SCALE GENOMIC DNA]</scope>
    <source>
        <strain>DSM 21510 / WK1</strain>
    </source>
</reference>
<protein>
    <recommendedName>
        <fullName evidence="1">Thiamine-phosphate synthase</fullName>
        <shortName evidence="1">TP synthase</shortName>
        <shortName evidence="1">TPS</shortName>
        <ecNumber evidence="1">2.5.1.3</ecNumber>
    </recommendedName>
    <alternativeName>
        <fullName evidence="1">Thiamine-phosphate pyrophosphorylase</fullName>
        <shortName evidence="1">TMP pyrophosphorylase</shortName>
        <shortName evidence="1">TMP-PPase</shortName>
    </alternativeName>
</protein>